<organism>
    <name type="scientific">Brucella suis (strain ATCC 23445 / NCTC 10510)</name>
    <dbReference type="NCBI Taxonomy" id="470137"/>
    <lineage>
        <taxon>Bacteria</taxon>
        <taxon>Pseudomonadati</taxon>
        <taxon>Pseudomonadota</taxon>
        <taxon>Alphaproteobacteria</taxon>
        <taxon>Hyphomicrobiales</taxon>
        <taxon>Brucellaceae</taxon>
        <taxon>Brucella/Ochrobactrum group</taxon>
        <taxon>Brucella</taxon>
    </lineage>
</organism>
<reference key="1">
    <citation type="submission" date="2007-12" db="EMBL/GenBank/DDBJ databases">
        <title>Brucella suis ATCC 23445 whole genome shotgun sequencing project.</title>
        <authorList>
            <person name="Setubal J.C."/>
            <person name="Bowns C."/>
            <person name="Boyle S."/>
            <person name="Crasta O.R."/>
            <person name="Czar M.J."/>
            <person name="Dharmanolla C."/>
            <person name="Gillespie J.J."/>
            <person name="Kenyon R.W."/>
            <person name="Lu J."/>
            <person name="Mane S."/>
            <person name="Mohapatra S."/>
            <person name="Nagrani S."/>
            <person name="Purkayastha A."/>
            <person name="Rajasimha H.K."/>
            <person name="Shallom J.M."/>
            <person name="Shallom S."/>
            <person name="Shukla M."/>
            <person name="Snyder E.E."/>
            <person name="Sobral B.W."/>
            <person name="Wattam A.R."/>
            <person name="Will R."/>
            <person name="Williams K."/>
            <person name="Yoo H."/>
            <person name="Bruce D."/>
            <person name="Detter C."/>
            <person name="Munk C."/>
            <person name="Brettin T.S."/>
        </authorList>
    </citation>
    <scope>NUCLEOTIDE SEQUENCE [LARGE SCALE GENOMIC DNA]</scope>
    <source>
        <strain>ATCC 23445 / NCTC 10510</strain>
    </source>
</reference>
<name>QUEA_BRUSI</name>
<protein>
    <recommendedName>
        <fullName evidence="1">S-adenosylmethionine:tRNA ribosyltransferase-isomerase</fullName>
        <ecNumber evidence="1">2.4.99.17</ecNumber>
    </recommendedName>
    <alternativeName>
        <fullName evidence="1">Queuosine biosynthesis protein QueA</fullName>
    </alternativeName>
</protein>
<feature type="chain" id="PRO_1000075994" description="S-adenosylmethionine:tRNA ribosyltransferase-isomerase">
    <location>
        <begin position="1"/>
        <end position="363"/>
    </location>
</feature>
<evidence type="ECO:0000255" key="1">
    <source>
        <dbReference type="HAMAP-Rule" id="MF_00113"/>
    </source>
</evidence>
<sequence length="363" mass="40174">MRVDLFDFDLPEERIALRPVEPRDHAKLLHVRPGEPFEDRHVYDLPDLLQPGDALVFNDTKVIPAQLEGMRERTGNISQVSATLHMRVGPDRWKAFLRPAKRVKEGDRIRFGHSGTSCFLGTLDATVAEKGDSGEALLVFDLSGAVLDEAIAAVGHIPLPPYIASKRPEDERDRKDYQTVYAREEGAVAAPTAGLHFTPDLLEKIKARGIEEHFVTLHVGAGTFLPVKADDTGDHKMHAEIGHVSQRTASALNAVHERGGRIICVGTTSLRLIESATGEDGVVRPWSGATDIFITPGYRFRAVDLLMTNFHLPRSTLFMLVSAFSGLDTMHAAYNYAIADGYRFYSYGDASLLERIDHDRHSA</sequence>
<keyword id="KW-0963">Cytoplasm</keyword>
<keyword id="KW-0671">Queuosine biosynthesis</keyword>
<keyword id="KW-0949">S-adenosyl-L-methionine</keyword>
<keyword id="KW-0808">Transferase</keyword>
<gene>
    <name evidence="1" type="primary">queA</name>
    <name type="ordered locus">BSUIS_A1139</name>
</gene>
<proteinExistence type="inferred from homology"/>
<dbReference type="EC" id="2.4.99.17" evidence="1"/>
<dbReference type="EMBL" id="CP000911">
    <property type="protein sequence ID" value="ABY38193.1"/>
    <property type="molecule type" value="Genomic_DNA"/>
</dbReference>
<dbReference type="RefSeq" id="WP_002964220.1">
    <property type="nucleotide sequence ID" value="NC_010169.1"/>
</dbReference>
<dbReference type="SMR" id="B0CGP2"/>
<dbReference type="GeneID" id="97533650"/>
<dbReference type="KEGG" id="bmt:BSUIS_A1139"/>
<dbReference type="HOGENOM" id="CLU_039110_1_1_5"/>
<dbReference type="UniPathway" id="UPA00392"/>
<dbReference type="Proteomes" id="UP000008545">
    <property type="component" value="Chromosome I"/>
</dbReference>
<dbReference type="GO" id="GO:0005737">
    <property type="term" value="C:cytoplasm"/>
    <property type="evidence" value="ECO:0007669"/>
    <property type="project" value="UniProtKB-SubCell"/>
</dbReference>
<dbReference type="GO" id="GO:0051075">
    <property type="term" value="F:S-adenosylmethionine:tRNA ribosyltransferase-isomerase activity"/>
    <property type="evidence" value="ECO:0007669"/>
    <property type="project" value="UniProtKB-EC"/>
</dbReference>
<dbReference type="GO" id="GO:0008616">
    <property type="term" value="P:queuosine biosynthetic process"/>
    <property type="evidence" value="ECO:0007669"/>
    <property type="project" value="UniProtKB-UniRule"/>
</dbReference>
<dbReference type="GO" id="GO:0002099">
    <property type="term" value="P:tRNA wobble guanine modification"/>
    <property type="evidence" value="ECO:0007669"/>
    <property type="project" value="TreeGrafter"/>
</dbReference>
<dbReference type="FunFam" id="3.40.1780.10:FF:000001">
    <property type="entry name" value="S-adenosylmethionine:tRNA ribosyltransferase-isomerase"/>
    <property type="match status" value="1"/>
</dbReference>
<dbReference type="Gene3D" id="2.40.10.240">
    <property type="entry name" value="QueA-like"/>
    <property type="match status" value="1"/>
</dbReference>
<dbReference type="Gene3D" id="3.40.1780.10">
    <property type="entry name" value="QueA-like"/>
    <property type="match status" value="1"/>
</dbReference>
<dbReference type="HAMAP" id="MF_00113">
    <property type="entry name" value="QueA"/>
    <property type="match status" value="1"/>
</dbReference>
<dbReference type="InterPro" id="IPR003699">
    <property type="entry name" value="QueA"/>
</dbReference>
<dbReference type="InterPro" id="IPR042118">
    <property type="entry name" value="QueA_dom1"/>
</dbReference>
<dbReference type="InterPro" id="IPR042119">
    <property type="entry name" value="QueA_dom2"/>
</dbReference>
<dbReference type="InterPro" id="IPR036100">
    <property type="entry name" value="QueA_sf"/>
</dbReference>
<dbReference type="NCBIfam" id="NF001140">
    <property type="entry name" value="PRK00147.1"/>
    <property type="match status" value="1"/>
</dbReference>
<dbReference type="NCBIfam" id="TIGR00113">
    <property type="entry name" value="queA"/>
    <property type="match status" value="1"/>
</dbReference>
<dbReference type="PANTHER" id="PTHR30307">
    <property type="entry name" value="S-ADENOSYLMETHIONINE:TRNA RIBOSYLTRANSFERASE-ISOMERASE"/>
    <property type="match status" value="1"/>
</dbReference>
<dbReference type="PANTHER" id="PTHR30307:SF0">
    <property type="entry name" value="S-ADENOSYLMETHIONINE:TRNA RIBOSYLTRANSFERASE-ISOMERASE"/>
    <property type="match status" value="1"/>
</dbReference>
<dbReference type="Pfam" id="PF02547">
    <property type="entry name" value="Queuosine_synth"/>
    <property type="match status" value="1"/>
</dbReference>
<dbReference type="SUPFAM" id="SSF111337">
    <property type="entry name" value="QueA-like"/>
    <property type="match status" value="1"/>
</dbReference>
<comment type="function">
    <text evidence="1">Transfers and isomerizes the ribose moiety from AdoMet to the 7-aminomethyl group of 7-deazaguanine (preQ1-tRNA) to give epoxyqueuosine (oQ-tRNA).</text>
</comment>
<comment type="catalytic activity">
    <reaction evidence="1">
        <text>7-aminomethyl-7-carbaguanosine(34) in tRNA + S-adenosyl-L-methionine = epoxyqueuosine(34) in tRNA + adenine + L-methionine + 2 H(+)</text>
        <dbReference type="Rhea" id="RHEA:32155"/>
        <dbReference type="Rhea" id="RHEA-COMP:10342"/>
        <dbReference type="Rhea" id="RHEA-COMP:18582"/>
        <dbReference type="ChEBI" id="CHEBI:15378"/>
        <dbReference type="ChEBI" id="CHEBI:16708"/>
        <dbReference type="ChEBI" id="CHEBI:57844"/>
        <dbReference type="ChEBI" id="CHEBI:59789"/>
        <dbReference type="ChEBI" id="CHEBI:82833"/>
        <dbReference type="ChEBI" id="CHEBI:194443"/>
        <dbReference type="EC" id="2.4.99.17"/>
    </reaction>
</comment>
<comment type="pathway">
    <text evidence="1">tRNA modification; tRNA-queuosine biosynthesis.</text>
</comment>
<comment type="subunit">
    <text evidence="1">Monomer.</text>
</comment>
<comment type="subcellular location">
    <subcellularLocation>
        <location evidence="1">Cytoplasm</location>
    </subcellularLocation>
</comment>
<comment type="similarity">
    <text evidence="1">Belongs to the QueA family.</text>
</comment>
<accession>B0CGP2</accession>